<proteinExistence type="evidence at transcript level"/>
<name>YUNB_BACSU</name>
<feature type="chain" id="PRO_0000360215" description="Sporulation protein YunB">
    <location>
        <begin position="1"/>
        <end position="254"/>
    </location>
</feature>
<feature type="transmembrane region" description="Helical" evidence="1">
    <location>
        <begin position="18"/>
        <end position="38"/>
    </location>
</feature>
<feature type="region of interest" description="Disordered" evidence="2">
    <location>
        <begin position="226"/>
        <end position="254"/>
    </location>
</feature>
<feature type="compositionally biased region" description="Polar residues" evidence="2">
    <location>
        <begin position="231"/>
        <end position="242"/>
    </location>
</feature>
<feature type="compositionally biased region" description="Basic and acidic residues" evidence="2">
    <location>
        <begin position="243"/>
        <end position="254"/>
    </location>
</feature>
<accession>O32131</accession>
<gene>
    <name type="primary">yunB</name>
    <name type="ordered locus">BSU32350</name>
</gene>
<dbReference type="EMBL" id="AL009126">
    <property type="protein sequence ID" value="CAB15225.1"/>
    <property type="molecule type" value="Genomic_DNA"/>
</dbReference>
<dbReference type="PIR" id="E70015">
    <property type="entry name" value="E70015"/>
</dbReference>
<dbReference type="RefSeq" id="WP_009968113.1">
    <property type="nucleotide sequence ID" value="NZ_OZ025638.1"/>
</dbReference>
<dbReference type="SMR" id="O32131"/>
<dbReference type="FunCoup" id="O32131">
    <property type="interactions" value="83"/>
</dbReference>
<dbReference type="STRING" id="224308.BSU32350"/>
<dbReference type="PaxDb" id="224308-BSU32350"/>
<dbReference type="EnsemblBacteria" id="CAB15225">
    <property type="protein sequence ID" value="CAB15225"/>
    <property type="gene ID" value="BSU_32350"/>
</dbReference>
<dbReference type="GeneID" id="936670"/>
<dbReference type="KEGG" id="bsu:BSU32350"/>
<dbReference type="PATRIC" id="fig|224308.179.peg.3502"/>
<dbReference type="eggNOG" id="ENOG5031XUS">
    <property type="taxonomic scope" value="Bacteria"/>
</dbReference>
<dbReference type="InParanoid" id="O32131"/>
<dbReference type="OrthoDB" id="1649278at2"/>
<dbReference type="PhylomeDB" id="O32131"/>
<dbReference type="BioCyc" id="BSUB:BSU32350-MONOMER"/>
<dbReference type="Proteomes" id="UP000001570">
    <property type="component" value="Chromosome"/>
</dbReference>
<dbReference type="GO" id="GO:0005886">
    <property type="term" value="C:plasma membrane"/>
    <property type="evidence" value="ECO:0007669"/>
    <property type="project" value="UniProtKB-SubCell"/>
</dbReference>
<dbReference type="GO" id="GO:0030435">
    <property type="term" value="P:sporulation resulting in formation of a cellular spore"/>
    <property type="evidence" value="ECO:0007669"/>
    <property type="project" value="UniProtKB-KW"/>
</dbReference>
<dbReference type="InterPro" id="IPR014197">
    <property type="entry name" value="Sporulation_prot_YunB"/>
</dbReference>
<dbReference type="NCBIfam" id="TIGR02832">
    <property type="entry name" value="spo_yunB"/>
    <property type="match status" value="1"/>
</dbReference>
<dbReference type="Pfam" id="PF09560">
    <property type="entry name" value="Spore_YunB"/>
    <property type="match status" value="1"/>
</dbReference>
<dbReference type="PIRSF" id="PIRSF021383">
    <property type="entry name" value="YunB"/>
    <property type="match status" value="1"/>
</dbReference>
<evidence type="ECO:0000255" key="1"/>
<evidence type="ECO:0000256" key="2">
    <source>
        <dbReference type="SAM" id="MobiDB-lite"/>
    </source>
</evidence>
<evidence type="ECO:0000269" key="3">
    <source>
    </source>
</evidence>
<evidence type="ECO:0000305" key="4"/>
<sequence>MPRYRGPFRKRGPLPFRYVMLLSVVFFILSTTVSLWMINGSIKPVLMDIGEMETKRIATEVIQDSIEDYMSDSENMKDMFQMNSDENGNLTTIDFNTQVVNSVKTKVTKQLQAHLKEMETHTGHSGASENIMINIPLGQVTGNSLLGNLGPKIPVRFNLIGDAFTDVKTKIKPYGINNALIDISIFVEIKVKVIIPFASKTAVVTNNVPVSIKAVQGEVPQFYNGSGGSGVTPSVQLPSSKENGADSKKEKSSK</sequence>
<protein>
    <recommendedName>
        <fullName>Sporulation protein YunB</fullName>
    </recommendedName>
</protein>
<keyword id="KW-1003">Cell membrane</keyword>
<keyword id="KW-0472">Membrane</keyword>
<keyword id="KW-1185">Reference proteome</keyword>
<keyword id="KW-0749">Sporulation</keyword>
<keyword id="KW-0812">Transmembrane</keyword>
<keyword id="KW-1133">Transmembrane helix</keyword>
<organism>
    <name type="scientific">Bacillus subtilis (strain 168)</name>
    <dbReference type="NCBI Taxonomy" id="224308"/>
    <lineage>
        <taxon>Bacteria</taxon>
        <taxon>Bacillati</taxon>
        <taxon>Bacillota</taxon>
        <taxon>Bacilli</taxon>
        <taxon>Bacillales</taxon>
        <taxon>Bacillaceae</taxon>
        <taxon>Bacillus</taxon>
    </lineage>
</organism>
<reference key="1">
    <citation type="journal article" date="1997" name="Nature">
        <title>The complete genome sequence of the Gram-positive bacterium Bacillus subtilis.</title>
        <authorList>
            <person name="Kunst F."/>
            <person name="Ogasawara N."/>
            <person name="Moszer I."/>
            <person name="Albertini A.M."/>
            <person name="Alloni G."/>
            <person name="Azevedo V."/>
            <person name="Bertero M.G."/>
            <person name="Bessieres P."/>
            <person name="Bolotin A."/>
            <person name="Borchert S."/>
            <person name="Borriss R."/>
            <person name="Boursier L."/>
            <person name="Brans A."/>
            <person name="Braun M."/>
            <person name="Brignell S.C."/>
            <person name="Bron S."/>
            <person name="Brouillet S."/>
            <person name="Bruschi C.V."/>
            <person name="Caldwell B."/>
            <person name="Capuano V."/>
            <person name="Carter N.M."/>
            <person name="Choi S.-K."/>
            <person name="Codani J.-J."/>
            <person name="Connerton I.F."/>
            <person name="Cummings N.J."/>
            <person name="Daniel R.A."/>
            <person name="Denizot F."/>
            <person name="Devine K.M."/>
            <person name="Duesterhoeft A."/>
            <person name="Ehrlich S.D."/>
            <person name="Emmerson P.T."/>
            <person name="Entian K.-D."/>
            <person name="Errington J."/>
            <person name="Fabret C."/>
            <person name="Ferrari E."/>
            <person name="Foulger D."/>
            <person name="Fritz C."/>
            <person name="Fujita M."/>
            <person name="Fujita Y."/>
            <person name="Fuma S."/>
            <person name="Galizzi A."/>
            <person name="Galleron N."/>
            <person name="Ghim S.-Y."/>
            <person name="Glaser P."/>
            <person name="Goffeau A."/>
            <person name="Golightly E.J."/>
            <person name="Grandi G."/>
            <person name="Guiseppi G."/>
            <person name="Guy B.J."/>
            <person name="Haga K."/>
            <person name="Haiech J."/>
            <person name="Harwood C.R."/>
            <person name="Henaut A."/>
            <person name="Hilbert H."/>
            <person name="Holsappel S."/>
            <person name="Hosono S."/>
            <person name="Hullo M.-F."/>
            <person name="Itaya M."/>
            <person name="Jones L.-M."/>
            <person name="Joris B."/>
            <person name="Karamata D."/>
            <person name="Kasahara Y."/>
            <person name="Klaerr-Blanchard M."/>
            <person name="Klein C."/>
            <person name="Kobayashi Y."/>
            <person name="Koetter P."/>
            <person name="Koningstein G."/>
            <person name="Krogh S."/>
            <person name="Kumano M."/>
            <person name="Kurita K."/>
            <person name="Lapidus A."/>
            <person name="Lardinois S."/>
            <person name="Lauber J."/>
            <person name="Lazarevic V."/>
            <person name="Lee S.-M."/>
            <person name="Levine A."/>
            <person name="Liu H."/>
            <person name="Masuda S."/>
            <person name="Mauel C."/>
            <person name="Medigue C."/>
            <person name="Medina N."/>
            <person name="Mellado R.P."/>
            <person name="Mizuno M."/>
            <person name="Moestl D."/>
            <person name="Nakai S."/>
            <person name="Noback M."/>
            <person name="Noone D."/>
            <person name="O'Reilly M."/>
            <person name="Ogawa K."/>
            <person name="Ogiwara A."/>
            <person name="Oudega B."/>
            <person name="Park S.-H."/>
            <person name="Parro V."/>
            <person name="Pohl T.M."/>
            <person name="Portetelle D."/>
            <person name="Porwollik S."/>
            <person name="Prescott A.M."/>
            <person name="Presecan E."/>
            <person name="Pujic P."/>
            <person name="Purnelle B."/>
            <person name="Rapoport G."/>
            <person name="Rey M."/>
            <person name="Reynolds S."/>
            <person name="Rieger M."/>
            <person name="Rivolta C."/>
            <person name="Rocha E."/>
            <person name="Roche B."/>
            <person name="Rose M."/>
            <person name="Sadaie Y."/>
            <person name="Sato T."/>
            <person name="Scanlan E."/>
            <person name="Schleich S."/>
            <person name="Schroeter R."/>
            <person name="Scoffone F."/>
            <person name="Sekiguchi J."/>
            <person name="Sekowska A."/>
            <person name="Seror S.J."/>
            <person name="Serror P."/>
            <person name="Shin B.-S."/>
            <person name="Soldo B."/>
            <person name="Sorokin A."/>
            <person name="Tacconi E."/>
            <person name="Takagi T."/>
            <person name="Takahashi H."/>
            <person name="Takemaru K."/>
            <person name="Takeuchi M."/>
            <person name="Tamakoshi A."/>
            <person name="Tanaka T."/>
            <person name="Terpstra P."/>
            <person name="Tognoni A."/>
            <person name="Tosato V."/>
            <person name="Uchiyama S."/>
            <person name="Vandenbol M."/>
            <person name="Vannier F."/>
            <person name="Vassarotti A."/>
            <person name="Viari A."/>
            <person name="Wambutt R."/>
            <person name="Wedler E."/>
            <person name="Wedler H."/>
            <person name="Weitzenegger T."/>
            <person name="Winters P."/>
            <person name="Wipat A."/>
            <person name="Yamamoto H."/>
            <person name="Yamane K."/>
            <person name="Yasumoto K."/>
            <person name="Yata K."/>
            <person name="Yoshida K."/>
            <person name="Yoshikawa H.-F."/>
            <person name="Zumstein E."/>
            <person name="Yoshikawa H."/>
            <person name="Danchin A."/>
        </authorList>
    </citation>
    <scope>NUCLEOTIDE SEQUENCE [LARGE SCALE GENOMIC DNA]</scope>
    <source>
        <strain>168</strain>
    </source>
</reference>
<reference key="2">
    <citation type="journal article" date="2003" name="J. Mol. Biol.">
        <title>The sigmaE regulon and the identification of additional sporulation genes in Bacillus subtilis.</title>
        <authorList>
            <person name="Eichenberger P."/>
            <person name="Jensen S.T."/>
            <person name="Conlon E.M."/>
            <person name="van Ooij C."/>
            <person name="Silvaggi J."/>
            <person name="Gonzalez-Pastor J.-E."/>
            <person name="Fujita M."/>
            <person name="Ben-Yehuda S."/>
            <person name="Stragier P."/>
            <person name="Liu J.S."/>
            <person name="Losick R."/>
        </authorList>
    </citation>
    <scope>FUNCTION</scope>
    <scope>INDUCTION</scope>
</reference>
<comment type="function">
    <text evidence="3">Required for sporulation.</text>
</comment>
<comment type="subcellular location">
    <subcellularLocation>
        <location evidence="4">Cell membrane</location>
        <topology evidence="4">Single-pass membrane protein</topology>
    </subcellularLocation>
</comment>
<comment type="induction">
    <text evidence="3">Expression controlled by a sigma-E-regulated promoter which needs the sigma-E factor for the binding of the RNA polymerase and subsequent transcription.</text>
</comment>